<comment type="function">
    <text evidence="2">Member of the two-component regulatory system SrrA/SrrB, which is involved in the global regulation of staphylococcal virulence factors in response to environmental oxygen levels as well as biofilm formation. Also plays an essential role in host-derived nitric oxide resistance by regulating hmp/flavohemoglobin, an enzyme that detoxifies nitric oxide by converting it to nitrate. Functions as a sensor protein kinase which is autophosphorylated at a histidine residue and transfers its phosphate group to SrrA. In turn, SrrA binds to the upstream promoter regions of the target genes to positively and negatively regulate their expression.</text>
</comment>
<comment type="catalytic activity">
    <reaction>
        <text>ATP + protein L-histidine = ADP + protein N-phospho-L-histidine.</text>
        <dbReference type="EC" id="2.7.13.3"/>
    </reaction>
</comment>
<comment type="subcellular location">
    <subcellularLocation>
        <location evidence="1">Cell membrane</location>
        <topology evidence="1">Multi-pass membrane protein</topology>
    </subcellularLocation>
</comment>
<comment type="sequence caution" evidence="6">
    <conflict type="erroneous initiation">
        <sequence resource="EMBL-CDS" id="BAB42584"/>
    </conflict>
</comment>
<feature type="chain" id="PRO_0000074884" description="Sensor protein SrrB">
    <location>
        <begin position="1"/>
        <end position="583"/>
    </location>
</feature>
<feature type="topological domain" description="Cytoplasmic" evidence="3">
    <location>
        <begin position="1"/>
        <end position="11"/>
    </location>
</feature>
<feature type="transmembrane region" description="Helical" evidence="3">
    <location>
        <begin position="12"/>
        <end position="32"/>
    </location>
</feature>
<feature type="topological domain" description="Extracellular" evidence="3">
    <location>
        <begin position="33"/>
        <end position="174"/>
    </location>
</feature>
<feature type="transmembrane region" description="Helical" evidence="3">
    <location>
        <begin position="175"/>
        <end position="195"/>
    </location>
</feature>
<feature type="topological domain" description="Cytoplasmic" evidence="3">
    <location>
        <begin position="196"/>
        <end position="583"/>
    </location>
</feature>
<feature type="domain" description="HAMP" evidence="4">
    <location>
        <begin position="197"/>
        <end position="249"/>
    </location>
</feature>
<feature type="domain" description="Histidine kinase" evidence="5">
    <location>
        <begin position="366"/>
        <end position="583"/>
    </location>
</feature>
<feature type="modified residue" description="Phosphohistidine; by autocatalysis" evidence="5">
    <location>
        <position position="369"/>
    </location>
</feature>
<proteinExistence type="evidence at protein level"/>
<gene>
    <name type="primary">srrB</name>
    <name type="ordered locus">SA1322</name>
</gene>
<reference key="1">
    <citation type="journal article" date="2001" name="Lancet">
        <title>Whole genome sequencing of meticillin-resistant Staphylococcus aureus.</title>
        <authorList>
            <person name="Kuroda M."/>
            <person name="Ohta T."/>
            <person name="Uchiyama I."/>
            <person name="Baba T."/>
            <person name="Yuzawa H."/>
            <person name="Kobayashi I."/>
            <person name="Cui L."/>
            <person name="Oguchi A."/>
            <person name="Aoki K."/>
            <person name="Nagai Y."/>
            <person name="Lian J.-Q."/>
            <person name="Ito T."/>
            <person name="Kanamori M."/>
            <person name="Matsumaru H."/>
            <person name="Maruyama A."/>
            <person name="Murakami H."/>
            <person name="Hosoyama A."/>
            <person name="Mizutani-Ui Y."/>
            <person name="Takahashi N.K."/>
            <person name="Sawano T."/>
            <person name="Inoue R."/>
            <person name="Kaito C."/>
            <person name="Sekimizu K."/>
            <person name="Hirakawa H."/>
            <person name="Kuhara S."/>
            <person name="Goto S."/>
            <person name="Yabuzaki J."/>
            <person name="Kanehisa M."/>
            <person name="Yamashita A."/>
            <person name="Oshima K."/>
            <person name="Furuya K."/>
            <person name="Yoshino C."/>
            <person name="Shiba T."/>
            <person name="Hattori M."/>
            <person name="Ogasawara N."/>
            <person name="Hayashi H."/>
            <person name="Hiramatsu K."/>
        </authorList>
    </citation>
    <scope>NUCLEOTIDE SEQUENCE [LARGE SCALE GENOMIC DNA]</scope>
    <source>
        <strain>N315</strain>
    </source>
</reference>
<reference key="2">
    <citation type="submission" date="2007-10" db="UniProtKB">
        <title>Shotgun proteomic analysis of total and membrane protein extracts of S. aureus strain N315.</title>
        <authorList>
            <person name="Vaezzadeh A.R."/>
            <person name="Deshusses J."/>
            <person name="Lescuyer P."/>
            <person name="Hochstrasser D.F."/>
        </authorList>
    </citation>
    <scope>IDENTIFICATION BY MASS SPECTROMETRY [LARGE SCALE ANALYSIS]</scope>
    <source>
        <strain>N315</strain>
    </source>
</reference>
<organism>
    <name type="scientific">Staphylococcus aureus (strain N315)</name>
    <dbReference type="NCBI Taxonomy" id="158879"/>
    <lineage>
        <taxon>Bacteria</taxon>
        <taxon>Bacillati</taxon>
        <taxon>Bacillota</taxon>
        <taxon>Bacilli</taxon>
        <taxon>Bacillales</taxon>
        <taxon>Staphylococcaceae</taxon>
        <taxon>Staphylococcus</taxon>
    </lineage>
</organism>
<sequence length="583" mass="66062">MMSRLNSVVIKLWLTIILIVTTVLILLSIALITFMQYYFTQETENAIREDARRISSLVEQSHNKEEAIKYSQTLIENPGGLMIINNKHRQSTASLSNIKKQMLNEVVNNDHFDDVFDKGKSVTRNVTIKEKGSSQTYILLGYPTKAQKNSHSKYSGVFIYKDLKSIEDTNNAITIITIITAVIFLTITTVFAFFLSSRITKPLRRLRDQATRVSEGDYSYKPSVTTKDEIGQLSQAFNQMSTEIEEHVDALSTSKNIRDSLINSMVEGVLGINESRQIILSNKMANDIMDNIDEDAKAFLLRQIEDTFKSKQTEMRDLEMNARFFVVTTSYIDKIEQGGKSGVVVTVRDMTNEHNLDQMKKDFIANVSHELRTPISLLQGYTESIVDGIVTEPDEIKESLAVVLDESKRLNRLVNELLNVARMDAEGLSVNKEVQPIAALLDKMKIKYRQQADDLGLNMTFNYCKKRVWSYDMDRMDQVLTNLIDNASRYTKPGDEIAITCDENESEDILYIKDTGTGIAPEHLQQVFDRFYKVDAARTRGKQGTGLGLFICKMIIEEHGGSIDVKSELGKGTTFIIKLPKPE</sequence>
<dbReference type="EC" id="2.7.13.3"/>
<dbReference type="EMBL" id="BA000018">
    <property type="protein sequence ID" value="BAB42584.1"/>
    <property type="status" value="ALT_INIT"/>
    <property type="molecule type" value="Genomic_DNA"/>
</dbReference>
<dbReference type="PIR" id="C89928">
    <property type="entry name" value="C89928"/>
</dbReference>
<dbReference type="RefSeq" id="WP_000987774.1">
    <property type="nucleotide sequence ID" value="NC_002745.2"/>
</dbReference>
<dbReference type="SMR" id="Q7A5H7"/>
<dbReference type="EnsemblBacteria" id="BAB42584">
    <property type="protein sequence ID" value="BAB42584"/>
    <property type="gene ID" value="BAB42584"/>
</dbReference>
<dbReference type="KEGG" id="sau:SA1322"/>
<dbReference type="HOGENOM" id="CLU_000445_89_2_9"/>
<dbReference type="GO" id="GO:0005886">
    <property type="term" value="C:plasma membrane"/>
    <property type="evidence" value="ECO:0007669"/>
    <property type="project" value="UniProtKB-SubCell"/>
</dbReference>
<dbReference type="GO" id="GO:0005524">
    <property type="term" value="F:ATP binding"/>
    <property type="evidence" value="ECO:0007669"/>
    <property type="project" value="UniProtKB-KW"/>
</dbReference>
<dbReference type="GO" id="GO:0000156">
    <property type="term" value="F:phosphorelay response regulator activity"/>
    <property type="evidence" value="ECO:0007669"/>
    <property type="project" value="TreeGrafter"/>
</dbReference>
<dbReference type="GO" id="GO:0000155">
    <property type="term" value="F:phosphorelay sensor kinase activity"/>
    <property type="evidence" value="ECO:0007669"/>
    <property type="project" value="InterPro"/>
</dbReference>
<dbReference type="GO" id="GO:0030295">
    <property type="term" value="F:protein kinase activator activity"/>
    <property type="evidence" value="ECO:0007669"/>
    <property type="project" value="TreeGrafter"/>
</dbReference>
<dbReference type="GO" id="GO:0007234">
    <property type="term" value="P:osmosensory signaling via phosphorelay pathway"/>
    <property type="evidence" value="ECO:0007669"/>
    <property type="project" value="TreeGrafter"/>
</dbReference>
<dbReference type="CDD" id="cd06225">
    <property type="entry name" value="HAMP"/>
    <property type="match status" value="1"/>
</dbReference>
<dbReference type="CDD" id="cd00075">
    <property type="entry name" value="HATPase"/>
    <property type="match status" value="1"/>
</dbReference>
<dbReference type="CDD" id="cd00082">
    <property type="entry name" value="HisKA"/>
    <property type="match status" value="1"/>
</dbReference>
<dbReference type="FunFam" id="3.30.565.10:FF:000006">
    <property type="entry name" value="Sensor histidine kinase WalK"/>
    <property type="match status" value="1"/>
</dbReference>
<dbReference type="FunFam" id="1.10.287.130:FF:000001">
    <property type="entry name" value="Two-component sensor histidine kinase"/>
    <property type="match status" value="1"/>
</dbReference>
<dbReference type="Gene3D" id="1.10.287.130">
    <property type="match status" value="1"/>
</dbReference>
<dbReference type="Gene3D" id="6.10.340.10">
    <property type="match status" value="1"/>
</dbReference>
<dbReference type="Gene3D" id="3.30.565.10">
    <property type="entry name" value="Histidine kinase-like ATPase, C-terminal domain"/>
    <property type="match status" value="1"/>
</dbReference>
<dbReference type="InterPro" id="IPR003660">
    <property type="entry name" value="HAMP_dom"/>
</dbReference>
<dbReference type="InterPro" id="IPR036890">
    <property type="entry name" value="HATPase_C_sf"/>
</dbReference>
<dbReference type="InterPro" id="IPR005467">
    <property type="entry name" value="His_kinase_dom"/>
</dbReference>
<dbReference type="InterPro" id="IPR003661">
    <property type="entry name" value="HisK_dim/P_dom"/>
</dbReference>
<dbReference type="InterPro" id="IPR036097">
    <property type="entry name" value="HisK_dim/P_sf"/>
</dbReference>
<dbReference type="InterPro" id="IPR041328">
    <property type="entry name" value="HisK_sensor"/>
</dbReference>
<dbReference type="InterPro" id="IPR052545">
    <property type="entry name" value="Light-responsive_reg"/>
</dbReference>
<dbReference type="InterPro" id="IPR004358">
    <property type="entry name" value="Sig_transdc_His_kin-like_C"/>
</dbReference>
<dbReference type="PANTHER" id="PTHR42878:SF3">
    <property type="entry name" value="HISTIDINE PROTEIN KINASE SAES"/>
    <property type="match status" value="1"/>
</dbReference>
<dbReference type="PANTHER" id="PTHR42878">
    <property type="entry name" value="TWO-COMPONENT HISTIDINE KINASE"/>
    <property type="match status" value="1"/>
</dbReference>
<dbReference type="Pfam" id="PF00672">
    <property type="entry name" value="HAMP"/>
    <property type="match status" value="1"/>
</dbReference>
<dbReference type="Pfam" id="PF02518">
    <property type="entry name" value="HATPase_c"/>
    <property type="match status" value="1"/>
</dbReference>
<dbReference type="Pfam" id="PF18698">
    <property type="entry name" value="HisK_sensor"/>
    <property type="match status" value="1"/>
</dbReference>
<dbReference type="Pfam" id="PF00512">
    <property type="entry name" value="HisKA"/>
    <property type="match status" value="1"/>
</dbReference>
<dbReference type="PRINTS" id="PR00344">
    <property type="entry name" value="BCTRLSENSOR"/>
</dbReference>
<dbReference type="SMART" id="SM00304">
    <property type="entry name" value="HAMP"/>
    <property type="match status" value="1"/>
</dbReference>
<dbReference type="SMART" id="SM00387">
    <property type="entry name" value="HATPase_c"/>
    <property type="match status" value="1"/>
</dbReference>
<dbReference type="SMART" id="SM00388">
    <property type="entry name" value="HisKA"/>
    <property type="match status" value="1"/>
</dbReference>
<dbReference type="SUPFAM" id="SSF55874">
    <property type="entry name" value="ATPase domain of HSP90 chaperone/DNA topoisomerase II/histidine kinase"/>
    <property type="match status" value="1"/>
</dbReference>
<dbReference type="SUPFAM" id="SSF158472">
    <property type="entry name" value="HAMP domain-like"/>
    <property type="match status" value="1"/>
</dbReference>
<dbReference type="SUPFAM" id="SSF47384">
    <property type="entry name" value="Homodimeric domain of signal transducing histidine kinase"/>
    <property type="match status" value="1"/>
</dbReference>
<dbReference type="PROSITE" id="PS50885">
    <property type="entry name" value="HAMP"/>
    <property type="match status" value="1"/>
</dbReference>
<dbReference type="PROSITE" id="PS50109">
    <property type="entry name" value="HIS_KIN"/>
    <property type="match status" value="1"/>
</dbReference>
<accession>Q7A5H7</accession>
<name>SRRB_STAAN</name>
<keyword id="KW-0067">ATP-binding</keyword>
<keyword id="KW-1003">Cell membrane</keyword>
<keyword id="KW-0418">Kinase</keyword>
<keyword id="KW-0472">Membrane</keyword>
<keyword id="KW-0547">Nucleotide-binding</keyword>
<keyword id="KW-0597">Phosphoprotein</keyword>
<keyword id="KW-0808">Transferase</keyword>
<keyword id="KW-0812">Transmembrane</keyword>
<keyword id="KW-1133">Transmembrane helix</keyword>
<keyword id="KW-0902">Two-component regulatory system</keyword>
<protein>
    <recommendedName>
        <fullName>Sensor protein SrrB</fullName>
        <ecNumber>2.7.13.3</ecNumber>
    </recommendedName>
    <alternativeName>
        <fullName>Staphylococcal respiratory response protein B</fullName>
    </alternativeName>
</protein>
<evidence type="ECO:0000250" key="1"/>
<evidence type="ECO:0000250" key="2">
    <source>
        <dbReference type="UniProtKB" id="Q5HFT1"/>
    </source>
</evidence>
<evidence type="ECO:0000255" key="3"/>
<evidence type="ECO:0000255" key="4">
    <source>
        <dbReference type="PROSITE-ProRule" id="PRU00102"/>
    </source>
</evidence>
<evidence type="ECO:0000255" key="5">
    <source>
        <dbReference type="PROSITE-ProRule" id="PRU00107"/>
    </source>
</evidence>
<evidence type="ECO:0000305" key="6"/>